<dbReference type="EMBL" id="AK002077">
    <property type="protein sequence ID" value="BAA92072.1"/>
    <property type="molecule type" value="mRNA"/>
</dbReference>
<dbReference type="EMBL" id="BC053907">
    <property type="protein sequence ID" value="AAH53907.1"/>
    <property type="molecule type" value="mRNA"/>
</dbReference>
<dbReference type="CCDS" id="CCDS7864.1"/>
<dbReference type="RefSeq" id="NP_060832.1">
    <property type="nucleotide sequence ID" value="NM_018362.4"/>
</dbReference>
<dbReference type="PDB" id="3LRA">
    <property type="method" value="X-ray"/>
    <property type="resolution" value="2.95 A"/>
    <property type="chains" value="A=3-64"/>
</dbReference>
<dbReference type="PDBsum" id="3LRA"/>
<dbReference type="SMR" id="Q9NUP9"/>
<dbReference type="BioGRID" id="120608">
    <property type="interactions" value="129"/>
</dbReference>
<dbReference type="ComplexPortal" id="CPX-7745">
    <property type="entry name" value="LIN-10-LIN-2-LIN-7 complex, LIN7C variant"/>
</dbReference>
<dbReference type="CORUM" id="Q9NUP9"/>
<dbReference type="FunCoup" id="Q9NUP9">
    <property type="interactions" value="1488"/>
</dbReference>
<dbReference type="IntAct" id="Q9NUP9">
    <property type="interactions" value="84"/>
</dbReference>
<dbReference type="MINT" id="Q9NUP9"/>
<dbReference type="STRING" id="9606.ENSP00000278193"/>
<dbReference type="GlyGen" id="Q9NUP9">
    <property type="glycosylation" value="1 site, 1 O-linked glycan (1 site)"/>
</dbReference>
<dbReference type="iPTMnet" id="Q9NUP9"/>
<dbReference type="MetOSite" id="Q9NUP9"/>
<dbReference type="PhosphoSitePlus" id="Q9NUP9"/>
<dbReference type="SwissPalm" id="Q9NUP9"/>
<dbReference type="BioMuta" id="LIN7C"/>
<dbReference type="DMDM" id="59798474"/>
<dbReference type="jPOST" id="Q9NUP9"/>
<dbReference type="MassIVE" id="Q9NUP9"/>
<dbReference type="PaxDb" id="9606-ENSP00000278193"/>
<dbReference type="PeptideAtlas" id="Q9NUP9"/>
<dbReference type="ProteomicsDB" id="82705"/>
<dbReference type="Pumba" id="Q9NUP9"/>
<dbReference type="Antibodypedia" id="25423">
    <property type="antibodies" value="142 antibodies from 28 providers"/>
</dbReference>
<dbReference type="DNASU" id="55327"/>
<dbReference type="Ensembl" id="ENST00000278193.7">
    <property type="protein sequence ID" value="ENSP00000278193.2"/>
    <property type="gene ID" value="ENSG00000148943.12"/>
</dbReference>
<dbReference type="GeneID" id="55327"/>
<dbReference type="KEGG" id="hsa:55327"/>
<dbReference type="MANE-Select" id="ENST00000278193.7">
    <property type="protein sequence ID" value="ENSP00000278193.2"/>
    <property type="RefSeq nucleotide sequence ID" value="NM_018362.4"/>
    <property type="RefSeq protein sequence ID" value="NP_060832.1"/>
</dbReference>
<dbReference type="UCSC" id="uc001mrl.4">
    <property type="organism name" value="human"/>
</dbReference>
<dbReference type="AGR" id="HGNC:17789"/>
<dbReference type="CTD" id="55327"/>
<dbReference type="DisGeNET" id="55327"/>
<dbReference type="GeneCards" id="LIN7C"/>
<dbReference type="HGNC" id="HGNC:17789">
    <property type="gene designation" value="LIN7C"/>
</dbReference>
<dbReference type="HPA" id="ENSG00000148943">
    <property type="expression patterns" value="Low tissue specificity"/>
</dbReference>
<dbReference type="MIM" id="612332">
    <property type="type" value="gene"/>
</dbReference>
<dbReference type="neXtProt" id="NX_Q9NUP9"/>
<dbReference type="OpenTargets" id="ENSG00000148943"/>
<dbReference type="PharmGKB" id="PA134891786"/>
<dbReference type="VEuPathDB" id="HostDB:ENSG00000148943"/>
<dbReference type="eggNOG" id="KOG3550">
    <property type="taxonomic scope" value="Eukaryota"/>
</dbReference>
<dbReference type="GeneTree" id="ENSGT00940000153222"/>
<dbReference type="InParanoid" id="Q9NUP9"/>
<dbReference type="OMA" id="RFDKQRM"/>
<dbReference type="OrthoDB" id="10056216at2759"/>
<dbReference type="PAN-GO" id="Q9NUP9">
    <property type="GO annotations" value="8 GO annotations based on evolutionary models"/>
</dbReference>
<dbReference type="PhylomeDB" id="Q9NUP9"/>
<dbReference type="TreeFam" id="TF316850"/>
<dbReference type="PathwayCommons" id="Q9NUP9"/>
<dbReference type="Reactome" id="R-HSA-212676">
    <property type="pathway name" value="Dopamine Neurotransmitter Release Cycle"/>
</dbReference>
<dbReference type="Reactome" id="R-HSA-6794361">
    <property type="pathway name" value="Neurexins and neuroligins"/>
</dbReference>
<dbReference type="Reactome" id="R-HSA-9609736">
    <property type="pathway name" value="Assembly and cell surface presentation of NMDA receptors"/>
</dbReference>
<dbReference type="SignaLink" id="Q9NUP9"/>
<dbReference type="SIGNOR" id="Q9NUP9"/>
<dbReference type="BioGRID-ORCS" id="55327">
    <property type="hits" value="49 hits in 1156 CRISPR screens"/>
</dbReference>
<dbReference type="CD-CODE" id="FB4E32DD">
    <property type="entry name" value="Presynaptic clusters and postsynaptic densities"/>
</dbReference>
<dbReference type="ChiTaRS" id="LIN7C">
    <property type="organism name" value="human"/>
</dbReference>
<dbReference type="EvolutionaryTrace" id="Q9NUP9"/>
<dbReference type="GeneWiki" id="LIN7C"/>
<dbReference type="GenomeRNAi" id="55327"/>
<dbReference type="Pharos" id="Q9NUP9">
    <property type="development level" value="Tbio"/>
</dbReference>
<dbReference type="PRO" id="PR:Q9NUP9"/>
<dbReference type="Proteomes" id="UP000005640">
    <property type="component" value="Chromosome 11"/>
</dbReference>
<dbReference type="RNAct" id="Q9NUP9">
    <property type="molecule type" value="protein"/>
</dbReference>
<dbReference type="Bgee" id="ENSG00000148943">
    <property type="expression patterns" value="Expressed in esophagus squamous epithelium and 205 other cell types or tissues"/>
</dbReference>
<dbReference type="ExpressionAtlas" id="Q9NUP9">
    <property type="expression patterns" value="baseline and differential"/>
</dbReference>
<dbReference type="GO" id="GO:0016323">
    <property type="term" value="C:basolateral plasma membrane"/>
    <property type="evidence" value="ECO:0000318"/>
    <property type="project" value="GO_Central"/>
</dbReference>
<dbReference type="GO" id="GO:0005923">
    <property type="term" value="C:bicellular tight junction"/>
    <property type="evidence" value="ECO:0007669"/>
    <property type="project" value="UniProtKB-SubCell"/>
</dbReference>
<dbReference type="GO" id="GO:0005911">
    <property type="term" value="C:cell-cell junction"/>
    <property type="evidence" value="ECO:0000314"/>
    <property type="project" value="UniProtKB"/>
</dbReference>
<dbReference type="GO" id="GO:0005737">
    <property type="term" value="C:cytoplasm"/>
    <property type="evidence" value="ECO:0000314"/>
    <property type="project" value="UniProtKB"/>
</dbReference>
<dbReference type="GO" id="GO:0098978">
    <property type="term" value="C:glutamatergic synapse"/>
    <property type="evidence" value="ECO:0007669"/>
    <property type="project" value="Ensembl"/>
</dbReference>
<dbReference type="GO" id="GO:0097025">
    <property type="term" value="C:MPP7-DLG1-LIN7 complex"/>
    <property type="evidence" value="ECO:0000314"/>
    <property type="project" value="UniProtKB"/>
</dbReference>
<dbReference type="GO" id="GO:0005886">
    <property type="term" value="C:plasma membrane"/>
    <property type="evidence" value="ECO:0000314"/>
    <property type="project" value="UniProtKB"/>
</dbReference>
<dbReference type="GO" id="GO:0098839">
    <property type="term" value="C:postsynaptic density membrane"/>
    <property type="evidence" value="ECO:0007669"/>
    <property type="project" value="UniProtKB-SubCell"/>
</dbReference>
<dbReference type="GO" id="GO:0098793">
    <property type="term" value="C:presynapse"/>
    <property type="evidence" value="ECO:0007669"/>
    <property type="project" value="GOC"/>
</dbReference>
<dbReference type="GO" id="GO:0045202">
    <property type="term" value="C:synapse"/>
    <property type="evidence" value="ECO:0000318"/>
    <property type="project" value="GO_Central"/>
</dbReference>
<dbReference type="GO" id="GO:0008092">
    <property type="term" value="F:cytoskeletal protein binding"/>
    <property type="evidence" value="ECO:0000353"/>
    <property type="project" value="UniProtKB"/>
</dbReference>
<dbReference type="GO" id="GO:0097016">
    <property type="term" value="F:L27 domain binding"/>
    <property type="evidence" value="ECO:0000314"/>
    <property type="project" value="UniProtKB"/>
</dbReference>
<dbReference type="GO" id="GO:0030165">
    <property type="term" value="F:PDZ domain binding"/>
    <property type="evidence" value="ECO:0007669"/>
    <property type="project" value="Ensembl"/>
</dbReference>
<dbReference type="GO" id="GO:0019904">
    <property type="term" value="F:protein domain specific binding"/>
    <property type="evidence" value="ECO:0000353"/>
    <property type="project" value="BHF-UCL"/>
</dbReference>
<dbReference type="GO" id="GO:0030674">
    <property type="term" value="F:protein-macromolecule adaptor activity"/>
    <property type="evidence" value="ECO:0000318"/>
    <property type="project" value="GO_Central"/>
</dbReference>
<dbReference type="GO" id="GO:0006887">
    <property type="term" value="P:exocytosis"/>
    <property type="evidence" value="ECO:0007669"/>
    <property type="project" value="UniProtKB-KW"/>
</dbReference>
<dbReference type="GO" id="GO:0002011">
    <property type="term" value="P:morphogenesis of an epithelial sheet"/>
    <property type="evidence" value="ECO:0000315"/>
    <property type="project" value="UniProtKB"/>
</dbReference>
<dbReference type="GO" id="GO:0007269">
    <property type="term" value="P:neurotransmitter secretion"/>
    <property type="evidence" value="ECO:0000318"/>
    <property type="project" value="GO_Central"/>
</dbReference>
<dbReference type="GO" id="GO:0015031">
    <property type="term" value="P:protein transport"/>
    <property type="evidence" value="ECO:0007669"/>
    <property type="project" value="UniProtKB-KW"/>
</dbReference>
<dbReference type="GO" id="GO:0008582">
    <property type="term" value="P:regulation of synaptic assembly at neuromuscular junction"/>
    <property type="evidence" value="ECO:0000318"/>
    <property type="project" value="GO_Central"/>
</dbReference>
<dbReference type="GO" id="GO:0048489">
    <property type="term" value="P:synaptic vesicle transport"/>
    <property type="evidence" value="ECO:0000318"/>
    <property type="project" value="GO_Central"/>
</dbReference>
<dbReference type="CDD" id="cd06796">
    <property type="entry name" value="PDZ_Lin-7-like"/>
    <property type="match status" value="1"/>
</dbReference>
<dbReference type="FunFam" id="2.30.42.10:FF:000076">
    <property type="entry name" value="Protein lin-7 homolog"/>
    <property type="match status" value="1"/>
</dbReference>
<dbReference type="Gene3D" id="2.30.42.10">
    <property type="match status" value="1"/>
</dbReference>
<dbReference type="Gene3D" id="1.10.287.650">
    <property type="entry name" value="L27 domain"/>
    <property type="match status" value="1"/>
</dbReference>
<dbReference type="IDEAL" id="IID00521"/>
<dbReference type="InterPro" id="IPR014775">
    <property type="entry name" value="L27_C"/>
</dbReference>
<dbReference type="InterPro" id="IPR004172">
    <property type="entry name" value="L27_dom"/>
</dbReference>
<dbReference type="InterPro" id="IPR036892">
    <property type="entry name" value="L27_dom_sf"/>
</dbReference>
<dbReference type="InterPro" id="IPR017365">
    <property type="entry name" value="LIN7"/>
</dbReference>
<dbReference type="InterPro" id="IPR051109">
    <property type="entry name" value="MAM_complex_regulator"/>
</dbReference>
<dbReference type="InterPro" id="IPR001478">
    <property type="entry name" value="PDZ"/>
</dbReference>
<dbReference type="InterPro" id="IPR036034">
    <property type="entry name" value="PDZ_sf"/>
</dbReference>
<dbReference type="PANTHER" id="PTHR14063">
    <property type="entry name" value="PROTEIN LIN-7 HOMOLOG"/>
    <property type="match status" value="1"/>
</dbReference>
<dbReference type="Pfam" id="PF02828">
    <property type="entry name" value="L27"/>
    <property type="match status" value="1"/>
</dbReference>
<dbReference type="Pfam" id="PF00595">
    <property type="entry name" value="PDZ"/>
    <property type="match status" value="1"/>
</dbReference>
<dbReference type="PIRSF" id="PIRSF038039">
    <property type="entry name" value="Lin-7_homologue"/>
    <property type="match status" value="1"/>
</dbReference>
<dbReference type="SMART" id="SM00569">
    <property type="entry name" value="L27"/>
    <property type="match status" value="1"/>
</dbReference>
<dbReference type="SMART" id="SM00228">
    <property type="entry name" value="PDZ"/>
    <property type="match status" value="1"/>
</dbReference>
<dbReference type="SUPFAM" id="SSF101288">
    <property type="entry name" value="L27 domain"/>
    <property type="match status" value="1"/>
</dbReference>
<dbReference type="SUPFAM" id="SSF50156">
    <property type="entry name" value="PDZ domain-like"/>
    <property type="match status" value="1"/>
</dbReference>
<dbReference type="PROSITE" id="PS51022">
    <property type="entry name" value="L27"/>
    <property type="match status" value="1"/>
</dbReference>
<dbReference type="PROSITE" id="PS50106">
    <property type="entry name" value="PDZ"/>
    <property type="match status" value="1"/>
</dbReference>
<organism>
    <name type="scientific">Homo sapiens</name>
    <name type="common">Human</name>
    <dbReference type="NCBI Taxonomy" id="9606"/>
    <lineage>
        <taxon>Eukaryota</taxon>
        <taxon>Metazoa</taxon>
        <taxon>Chordata</taxon>
        <taxon>Craniata</taxon>
        <taxon>Vertebrata</taxon>
        <taxon>Euteleostomi</taxon>
        <taxon>Mammalia</taxon>
        <taxon>Eutheria</taxon>
        <taxon>Euarchontoglires</taxon>
        <taxon>Primates</taxon>
        <taxon>Haplorrhini</taxon>
        <taxon>Catarrhini</taxon>
        <taxon>Hominidae</taxon>
        <taxon>Homo</taxon>
    </lineage>
</organism>
<evidence type="ECO:0000250" key="1"/>
<evidence type="ECO:0000250" key="2">
    <source>
        <dbReference type="UniProtKB" id="O88952"/>
    </source>
</evidence>
<evidence type="ECO:0000255" key="3">
    <source>
        <dbReference type="PROSITE-ProRule" id="PRU00143"/>
    </source>
</evidence>
<evidence type="ECO:0000255" key="4">
    <source>
        <dbReference type="PROSITE-ProRule" id="PRU00365"/>
    </source>
</evidence>
<evidence type="ECO:0000269" key="5">
    <source>
    </source>
</evidence>
<evidence type="ECO:0000269" key="6">
    <source>
    </source>
</evidence>
<evidence type="ECO:0000269" key="7">
    <source ref="3"/>
</evidence>
<evidence type="ECO:0000305" key="8"/>
<evidence type="ECO:0007744" key="9">
    <source>
    </source>
</evidence>
<evidence type="ECO:0007829" key="10">
    <source>
        <dbReference type="PDB" id="3LRA"/>
    </source>
</evidence>
<proteinExistence type="evidence at protein level"/>
<name>LIN7C_HUMAN</name>
<sequence length="197" mass="21834">MAALGEPVRLERDICRAIELLEKLQRSGEVPPQKLQALQRVLQSEFCNAVREVYEHVYETVDISSSPEVRANATAKATVAAFAASEGHSHPRVVELPKTEEGLGFNIMGGKEQNSPIYISRIIPGGIADRHGGLKRGDQLLSVNGVSVEGEHHEKAVELLKAAQGKVKLVVRYTPKVLEEMESRFEKMRSAKRRQQT</sequence>
<reference key="1">
    <citation type="journal article" date="2004" name="Nat. Genet.">
        <title>Complete sequencing and characterization of 21,243 full-length human cDNAs.</title>
        <authorList>
            <person name="Ota T."/>
            <person name="Suzuki Y."/>
            <person name="Nishikawa T."/>
            <person name="Otsuki T."/>
            <person name="Sugiyama T."/>
            <person name="Irie R."/>
            <person name="Wakamatsu A."/>
            <person name="Hayashi K."/>
            <person name="Sato H."/>
            <person name="Nagai K."/>
            <person name="Kimura K."/>
            <person name="Makita H."/>
            <person name="Sekine M."/>
            <person name="Obayashi M."/>
            <person name="Nishi T."/>
            <person name="Shibahara T."/>
            <person name="Tanaka T."/>
            <person name="Ishii S."/>
            <person name="Yamamoto J."/>
            <person name="Saito K."/>
            <person name="Kawai Y."/>
            <person name="Isono Y."/>
            <person name="Nakamura Y."/>
            <person name="Nagahari K."/>
            <person name="Murakami K."/>
            <person name="Yasuda T."/>
            <person name="Iwayanagi T."/>
            <person name="Wagatsuma M."/>
            <person name="Shiratori A."/>
            <person name="Sudo H."/>
            <person name="Hosoiri T."/>
            <person name="Kaku Y."/>
            <person name="Kodaira H."/>
            <person name="Kondo H."/>
            <person name="Sugawara M."/>
            <person name="Takahashi M."/>
            <person name="Kanda K."/>
            <person name="Yokoi T."/>
            <person name="Furuya T."/>
            <person name="Kikkawa E."/>
            <person name="Omura Y."/>
            <person name="Abe K."/>
            <person name="Kamihara K."/>
            <person name="Katsuta N."/>
            <person name="Sato K."/>
            <person name="Tanikawa M."/>
            <person name="Yamazaki M."/>
            <person name="Ninomiya K."/>
            <person name="Ishibashi T."/>
            <person name="Yamashita H."/>
            <person name="Murakawa K."/>
            <person name="Fujimori K."/>
            <person name="Tanai H."/>
            <person name="Kimata M."/>
            <person name="Watanabe M."/>
            <person name="Hiraoka S."/>
            <person name="Chiba Y."/>
            <person name="Ishida S."/>
            <person name="Ono Y."/>
            <person name="Takiguchi S."/>
            <person name="Watanabe S."/>
            <person name="Yosida M."/>
            <person name="Hotuta T."/>
            <person name="Kusano J."/>
            <person name="Kanehori K."/>
            <person name="Takahashi-Fujii A."/>
            <person name="Hara H."/>
            <person name="Tanase T.-O."/>
            <person name="Nomura Y."/>
            <person name="Togiya S."/>
            <person name="Komai F."/>
            <person name="Hara R."/>
            <person name="Takeuchi K."/>
            <person name="Arita M."/>
            <person name="Imose N."/>
            <person name="Musashino K."/>
            <person name="Yuuki H."/>
            <person name="Oshima A."/>
            <person name="Sasaki N."/>
            <person name="Aotsuka S."/>
            <person name="Yoshikawa Y."/>
            <person name="Matsunawa H."/>
            <person name="Ichihara T."/>
            <person name="Shiohata N."/>
            <person name="Sano S."/>
            <person name="Moriya S."/>
            <person name="Momiyama H."/>
            <person name="Satoh N."/>
            <person name="Takami S."/>
            <person name="Terashima Y."/>
            <person name="Suzuki O."/>
            <person name="Nakagawa S."/>
            <person name="Senoh A."/>
            <person name="Mizoguchi H."/>
            <person name="Goto Y."/>
            <person name="Shimizu F."/>
            <person name="Wakebe H."/>
            <person name="Hishigaki H."/>
            <person name="Watanabe T."/>
            <person name="Sugiyama A."/>
            <person name="Takemoto M."/>
            <person name="Kawakami B."/>
            <person name="Yamazaki M."/>
            <person name="Watanabe K."/>
            <person name="Kumagai A."/>
            <person name="Itakura S."/>
            <person name="Fukuzumi Y."/>
            <person name="Fujimori Y."/>
            <person name="Komiyama M."/>
            <person name="Tashiro H."/>
            <person name="Tanigami A."/>
            <person name="Fujiwara T."/>
            <person name="Ono T."/>
            <person name="Yamada K."/>
            <person name="Fujii Y."/>
            <person name="Ozaki K."/>
            <person name="Hirao M."/>
            <person name="Ohmori Y."/>
            <person name="Kawabata A."/>
            <person name="Hikiji T."/>
            <person name="Kobatake N."/>
            <person name="Inagaki H."/>
            <person name="Ikema Y."/>
            <person name="Okamoto S."/>
            <person name="Okitani R."/>
            <person name="Kawakami T."/>
            <person name="Noguchi S."/>
            <person name="Itoh T."/>
            <person name="Shigeta K."/>
            <person name="Senba T."/>
            <person name="Matsumura K."/>
            <person name="Nakajima Y."/>
            <person name="Mizuno T."/>
            <person name="Morinaga M."/>
            <person name="Sasaki M."/>
            <person name="Togashi T."/>
            <person name="Oyama M."/>
            <person name="Hata H."/>
            <person name="Watanabe M."/>
            <person name="Komatsu T."/>
            <person name="Mizushima-Sugano J."/>
            <person name="Satoh T."/>
            <person name="Shirai Y."/>
            <person name="Takahashi Y."/>
            <person name="Nakagawa K."/>
            <person name="Okumura K."/>
            <person name="Nagase T."/>
            <person name="Nomura N."/>
            <person name="Kikuchi H."/>
            <person name="Masuho Y."/>
            <person name="Yamashita R."/>
            <person name="Nakai K."/>
            <person name="Yada T."/>
            <person name="Nakamura Y."/>
            <person name="Ohara O."/>
            <person name="Isogai T."/>
            <person name="Sugano S."/>
        </authorList>
    </citation>
    <scope>NUCLEOTIDE SEQUENCE [LARGE SCALE MRNA]</scope>
    <source>
        <tissue>Placenta</tissue>
    </source>
</reference>
<reference key="2">
    <citation type="journal article" date="2004" name="Genome Res.">
        <title>The status, quality, and expansion of the NIH full-length cDNA project: the Mammalian Gene Collection (MGC).</title>
        <authorList>
            <consortium name="The MGC Project Team"/>
        </authorList>
    </citation>
    <scope>NUCLEOTIDE SEQUENCE [LARGE SCALE MRNA]</scope>
    <source>
        <tissue>Uterus</tissue>
    </source>
</reference>
<reference key="3">
    <citation type="submission" date="2009-06" db="UniProtKB">
        <authorList>
            <person name="Bienvenut W.V."/>
            <person name="Lao L."/>
            <person name="Ryan K.M."/>
        </authorList>
    </citation>
    <scope>PROTEIN SEQUENCE OF 2-12; 17-23 AND 77-92</scope>
    <scope>CLEAVAGE OF INITIATOR METHIONINE</scope>
    <scope>ACETYLATION AT ALA-2</scope>
    <scope>IDENTIFICATION BY MASS SPECTROMETRY</scope>
    <source>
        <tissue>Osteosarcoma</tissue>
    </source>
</reference>
<reference key="4">
    <citation type="journal article" date="2003" name="Dev. Cell">
        <title>Polar expression of ErbB-2/HER2 in epithelia. Bimodal regulation by Lin-7.</title>
        <authorList>
            <person name="Shelly M."/>
            <person name="Mosesson Y."/>
            <person name="Citri A."/>
            <person name="Lavi S."/>
            <person name="Zwang Y."/>
            <person name="Melamed-Book N."/>
            <person name="Aroeti B."/>
            <person name="Yarden Y."/>
        </authorList>
    </citation>
    <scope>SUBCELLULAR LOCATION</scope>
    <scope>INTERACTION WITH EGFR</scope>
</reference>
<reference key="5">
    <citation type="journal article" date="2007" name="J. Biol. Chem.">
        <title>The stardust family protein MPP7 forms a tripartite complex with LIN7 and DLG1 that regulates the stability and localization of DLG1 to cell junctions.</title>
        <authorList>
            <person name="Bohl J."/>
            <person name="Brimer N."/>
            <person name="Lyons C."/>
            <person name="Vande Pol S.B."/>
        </authorList>
    </citation>
    <scope>INTERACTION WITH DLG1 AND MPP7</scope>
</reference>
<reference key="6">
    <citation type="journal article" date="2011" name="BMC Syst. Biol.">
        <title>Initial characterization of the human central proteome.</title>
        <authorList>
            <person name="Burkard T.R."/>
            <person name="Planyavsky M."/>
            <person name="Kaupe I."/>
            <person name="Breitwieser F.P."/>
            <person name="Buerckstuemmer T."/>
            <person name="Bennett K.L."/>
            <person name="Superti-Furga G."/>
            <person name="Colinge J."/>
        </authorList>
    </citation>
    <scope>IDENTIFICATION BY MASS SPECTROMETRY [LARGE SCALE ANALYSIS]</scope>
</reference>
<reference key="7">
    <citation type="journal article" date="2011" name="J. Virol.">
        <title>The avian influenza virus NS1 ESEV PDZ binding motif associates with Dlg1 and Scribble to disrupt cellular tight junctions.</title>
        <authorList>
            <person name="Golebiewski L."/>
            <person name="Liu H."/>
            <person name="Javier R.T."/>
            <person name="Rice A.P."/>
        </authorList>
    </citation>
    <scope>INTERACTION WITH DLG1 AND INFLUENZA A NS1</scope>
    <scope>SUBCELLULAR LOCATION</scope>
</reference>
<reference key="8">
    <citation type="journal article" date="2012" name="Proc. Natl. Acad. Sci. U.S.A.">
        <title>N-terminal acetylome analyses and functional insights of the N-terminal acetyltransferase NatB.</title>
        <authorList>
            <person name="Van Damme P."/>
            <person name="Lasa M."/>
            <person name="Polevoda B."/>
            <person name="Gazquez C."/>
            <person name="Elosegui-Artola A."/>
            <person name="Kim D.S."/>
            <person name="De Juan-Pardo E."/>
            <person name="Demeyer K."/>
            <person name="Hole K."/>
            <person name="Larrea E."/>
            <person name="Timmerman E."/>
            <person name="Prieto J."/>
            <person name="Arnesen T."/>
            <person name="Sherman F."/>
            <person name="Gevaert K."/>
            <person name="Aldabe R."/>
        </authorList>
    </citation>
    <scope>ACETYLATION [LARGE SCALE ANALYSIS] AT ALA-2</scope>
    <scope>CLEAVAGE OF INITIATOR METHIONINE [LARGE SCALE ANALYSIS]</scope>
    <scope>IDENTIFICATION BY MASS SPECTROMETRY [LARGE SCALE ANALYSIS]</scope>
</reference>
<reference key="9">
    <citation type="journal article" date="2015" name="Proteomics">
        <title>N-terminome analysis of the human mitochondrial proteome.</title>
        <authorList>
            <person name="Vaca Jacome A.S."/>
            <person name="Rabilloud T."/>
            <person name="Schaeffer-Reiss C."/>
            <person name="Rompais M."/>
            <person name="Ayoub D."/>
            <person name="Lane L."/>
            <person name="Bairoch A."/>
            <person name="Van Dorsselaer A."/>
            <person name="Carapito C."/>
        </authorList>
    </citation>
    <scope>IDENTIFICATION BY MASS SPECTROMETRY [LARGE SCALE ANALYSIS]</scope>
</reference>
<reference key="10">
    <citation type="journal article" date="2010" name="FASEB J.">
        <title>Structural basis for tandem L27 domain-mediated polymerization.</title>
        <authorList>
            <person name="Yang X."/>
            <person name="Xie X."/>
            <person name="Chen L."/>
            <person name="Zhou H."/>
            <person name="Wang Z."/>
            <person name="Zhao W."/>
            <person name="Tian R."/>
            <person name="Zhang R."/>
            <person name="Tian C."/>
            <person name="Long J."/>
            <person name="Shen Y."/>
        </authorList>
    </citation>
    <scope>X-RAY CRYSTALLOGRAPHY (2.95 ANGSTROMS) OF 3-64 IN COMPLEX WITH MPP7 AND DLG1</scope>
    <scope>SUBUNIT</scope>
</reference>
<protein>
    <recommendedName>
        <fullName>Protein lin-7 homolog C</fullName>
        <shortName>Lin-7C</shortName>
    </recommendedName>
    <alternativeName>
        <fullName>Mammalian lin-seven protein 3</fullName>
        <shortName>MALS-3</shortName>
    </alternativeName>
    <alternativeName>
        <fullName>Vertebrate lin-7 homolog 3</fullName>
        <shortName>Veli-3</shortName>
    </alternativeName>
</protein>
<comment type="function">
    <text evidence="2">Plays a role in establishing and maintaining the asymmetric distribution of channels and receptors at the plasma membrane of polarized cells. Forms membrane-associated multiprotein complexes that may regulate delivery and recycling of proteins to the correct membrane domains. The tripartite complex composed of LIN7 (LIN7A, LIN7B or LIN7C), CASK and APBA1 associates with the motor protein KIF17 to transport vesicles containing N-methyl-D-aspartate (NMDA) receptor subunit NR2B along microtubules (By similarity). This complex may have the potential to couple synaptic vesicle exocytosis to cell adhesion in brain. Ensures the proper localization of GRIN2B (subunit 2B of the NMDA receptor) to neuronal postsynaptic density and may function in localizing synaptic vesicles at synapses where it is recruited by beta-catenin and cadherin. Required to localize Kir2 channels, GABA transporter (SLC6A12) and EGFR/ERBB1, ERBB2, ERBB3 and ERBB4 to the basolateral membrane of epithelial cells.</text>
</comment>
<comment type="subunit">
    <text evidence="1 2">Forms a complex with CASK and APBA1 or CASKIN1 (By similarity). Component of the brain-specific heterotrimeric complex (LIN-10-LIN-2-LIN-7 complex) composed of at least APBA1, CASK, and LIN7, which associates with the motor protein KIF17 to transport vesicles along microtubules (By similarity). Can also interact with other modular proteins containing protein-protein interaction domains like PALS1, PALS2, MPP7, DLG1, DLG2 and DLG3 through its L27 domain. Interacts with DLG4 and GRIN2B as well as CDH1 and CTNNB1, the channels KCNJ12/Kir2.2, KCNJ4/Kir2.3 and probably KCNJ2/Kir2.1 and SLC6A12/BGT-1 via its PDZ domain. The association of LIN7A with cadherin and beta-catenin is calcium-dependent, occurs at synaptic junctions and requires the actin cytoskeleton. Interacts with EGFR, ERBB2, ERBB3 and ERBB4 with both PDZ and KID domains. Associates with KIF17 via APBA1. Interacts with HTR4 (By similarity). Forms a tripartite complex composed of DLG1, MPP7 and LIN7 (LIN7A or LIN7C). Interacts with MAPK12 (By similarity).</text>
</comment>
<comment type="subunit">
    <text evidence="6">(Microbial infection) Interacts with DLG1; DLG1 acts as a scaffold protein that facilitates the interaction between LIN7C and influenza A virus protein NS1; the interaction facilitates translocation of LIN7C to cytoplasmic puncta.</text>
</comment>
<comment type="interaction">
    <interactant intactId="EBI-1171517">
        <id>Q9NUP9</id>
    </interactant>
    <interactant intactId="EBI-14385193">
        <id>Q14168-4</id>
        <label>MPP2</label>
    </interactant>
    <organismsDiffer>false</organismsDiffer>
    <experiments>7</experiments>
</comment>
<comment type="interaction">
    <interactant intactId="EBI-1171517">
        <id>Q9NUP9</id>
    </interactant>
    <interactant intactId="EBI-716157">
        <id>Q13368</id>
        <label>MPP3</label>
    </interactant>
    <organismsDiffer>false</organismsDiffer>
    <experiments>9</experiments>
</comment>
<comment type="interaction">
    <interactant intactId="EBI-1171517">
        <id>Q9NUP9</id>
    </interactant>
    <interactant intactId="EBI-2514004">
        <id>Q5T2T1</id>
        <label>MPP7</label>
    </interactant>
    <organismsDiffer>false</organismsDiffer>
    <experiments>6</experiments>
</comment>
<comment type="interaction">
    <interactant intactId="EBI-1171517">
        <id>Q9NUP9</id>
    </interactant>
    <interactant intactId="EBI-2513978">
        <id>Q8N3R9</id>
        <label>PALS1</label>
    </interactant>
    <organismsDiffer>false</organismsDiffer>
    <experiments>6</experiments>
</comment>
<comment type="interaction">
    <interactant intactId="EBI-1171517">
        <id>Q9NUP9</id>
    </interactant>
    <interactant intactId="EBI-2683764">
        <id>Q9NZW5</id>
        <label>PALS2</label>
    </interactant>
    <organismsDiffer>false</organismsDiffer>
    <experiments>8</experiments>
</comment>
<comment type="interaction">
    <interactant intactId="EBI-1171517">
        <id>Q9NUP9</id>
    </interactant>
    <interactant intactId="EBI-515331">
        <id>P07947</id>
        <label>YES1</label>
    </interactant>
    <organismsDiffer>false</organismsDiffer>
    <experiments>3</experiments>
</comment>
<comment type="subcellular location">
    <subcellularLocation>
        <location evidence="5 6">Cell membrane</location>
        <topology evidence="5">Peripheral membrane protein</topology>
    </subcellularLocation>
    <subcellularLocation>
        <location evidence="5">Basolateral cell membrane</location>
        <topology evidence="5">Peripheral membrane protein</topology>
    </subcellularLocation>
    <subcellularLocation>
        <location evidence="1">Cell junction</location>
    </subcellularLocation>
    <subcellularLocation>
        <location evidence="1">Postsynaptic density membrane</location>
        <topology evidence="1">Peripheral membrane protein</topology>
    </subcellularLocation>
    <subcellularLocation>
        <location evidence="1">Cell junction</location>
        <location evidence="1">Tight junction</location>
    </subcellularLocation>
    <text evidence="1">Mainly basolateral in renal epithelial cells.</text>
</comment>
<comment type="domain">
    <text evidence="1">The kinase interacting site is required for proper delivery of ERBB2 to the basolateral membrane.</text>
</comment>
<comment type="domain">
    <text evidence="1">The PDZ domain regulates endocytosis and recycling of the receptor at the membrane.</text>
</comment>
<comment type="domain">
    <text evidence="1">The L27 domain mediates interaction with CASK and is involved in the formation of multimeric complexes and the association of LIN7 to membranes.</text>
</comment>
<comment type="similarity">
    <text evidence="8">Belongs to the lin-7 family.</text>
</comment>
<feature type="initiator methionine" description="Removed" evidence="7 9">
    <location>
        <position position="1"/>
    </location>
</feature>
<feature type="chain" id="PRO_0000189629" description="Protein lin-7 homolog C">
    <location>
        <begin position="2"/>
        <end position="197"/>
    </location>
</feature>
<feature type="domain" description="L27" evidence="4">
    <location>
        <begin position="10"/>
        <end position="65"/>
    </location>
</feature>
<feature type="domain" description="PDZ" evidence="3">
    <location>
        <begin position="93"/>
        <end position="175"/>
    </location>
</feature>
<feature type="short sequence motif" description="Kinase interacting site" evidence="1">
    <location>
        <begin position="2"/>
        <end position="13"/>
    </location>
</feature>
<feature type="modified residue" description="N-acetylalanine" evidence="7 9">
    <location>
        <position position="2"/>
    </location>
</feature>
<feature type="helix" evidence="10">
    <location>
        <begin position="7"/>
        <end position="26"/>
    </location>
</feature>
<feature type="helix" evidence="10">
    <location>
        <begin position="33"/>
        <end position="43"/>
    </location>
</feature>
<feature type="helix" evidence="10">
    <location>
        <begin position="45"/>
        <end position="60"/>
    </location>
</feature>
<gene>
    <name type="primary">LIN7C</name>
    <name type="synonym">MALS3</name>
    <name type="synonym">VELI3</name>
</gene>
<keyword id="KW-0002">3D-structure</keyword>
<keyword id="KW-0007">Acetylation</keyword>
<keyword id="KW-0965">Cell junction</keyword>
<keyword id="KW-1003">Cell membrane</keyword>
<keyword id="KW-0903">Direct protein sequencing</keyword>
<keyword id="KW-0268">Exocytosis</keyword>
<keyword id="KW-0472">Membrane</keyword>
<keyword id="KW-0628">Postsynaptic cell membrane</keyword>
<keyword id="KW-0653">Protein transport</keyword>
<keyword id="KW-1267">Proteomics identification</keyword>
<keyword id="KW-1185">Reference proteome</keyword>
<keyword id="KW-0770">Synapse</keyword>
<keyword id="KW-0796">Tight junction</keyword>
<keyword id="KW-0813">Transport</keyword>
<accession>Q9NUP9</accession>